<dbReference type="EMBL" id="CP001616">
    <property type="protein sequence ID" value="ACQ94397.1"/>
    <property type="molecule type" value="Genomic_DNA"/>
</dbReference>
<dbReference type="RefSeq" id="WP_015879846.1">
    <property type="nucleotide sequence ID" value="NC_012691.1"/>
</dbReference>
<dbReference type="SMR" id="C4LBX3"/>
<dbReference type="STRING" id="595494.Tola_2804"/>
<dbReference type="KEGG" id="tau:Tola_2804"/>
<dbReference type="eggNOG" id="COG1781">
    <property type="taxonomic scope" value="Bacteria"/>
</dbReference>
<dbReference type="HOGENOM" id="CLU_128576_0_0_6"/>
<dbReference type="OrthoDB" id="5599321at2"/>
<dbReference type="Proteomes" id="UP000009073">
    <property type="component" value="Chromosome"/>
</dbReference>
<dbReference type="GO" id="GO:0009347">
    <property type="term" value="C:aspartate carbamoyltransferase complex"/>
    <property type="evidence" value="ECO:0007669"/>
    <property type="project" value="InterPro"/>
</dbReference>
<dbReference type="GO" id="GO:0046872">
    <property type="term" value="F:metal ion binding"/>
    <property type="evidence" value="ECO:0007669"/>
    <property type="project" value="UniProtKB-KW"/>
</dbReference>
<dbReference type="GO" id="GO:0006207">
    <property type="term" value="P:'de novo' pyrimidine nucleobase biosynthetic process"/>
    <property type="evidence" value="ECO:0007669"/>
    <property type="project" value="InterPro"/>
</dbReference>
<dbReference type="GO" id="GO:0006221">
    <property type="term" value="P:pyrimidine nucleotide biosynthetic process"/>
    <property type="evidence" value="ECO:0007669"/>
    <property type="project" value="UniProtKB-UniRule"/>
</dbReference>
<dbReference type="Gene3D" id="2.30.30.20">
    <property type="entry name" value="Aspartate carbamoyltransferase regulatory subunit, C-terminal domain"/>
    <property type="match status" value="1"/>
</dbReference>
<dbReference type="Gene3D" id="3.30.70.140">
    <property type="entry name" value="Aspartate carbamoyltransferase regulatory subunit, N-terminal domain"/>
    <property type="match status" value="1"/>
</dbReference>
<dbReference type="HAMAP" id="MF_00002">
    <property type="entry name" value="Asp_carb_tr_reg"/>
    <property type="match status" value="1"/>
</dbReference>
<dbReference type="InterPro" id="IPR020545">
    <property type="entry name" value="Asp_carbamoyltransf_reg_N"/>
</dbReference>
<dbReference type="InterPro" id="IPR002801">
    <property type="entry name" value="Asp_carbamoylTrfase_reg"/>
</dbReference>
<dbReference type="InterPro" id="IPR020542">
    <property type="entry name" value="Asp_carbamoyltrfase_reg_C"/>
</dbReference>
<dbReference type="InterPro" id="IPR036792">
    <property type="entry name" value="Asp_carbatrfase_reg_C_sf"/>
</dbReference>
<dbReference type="InterPro" id="IPR036793">
    <property type="entry name" value="Asp_carbatrfase_reg_N_sf"/>
</dbReference>
<dbReference type="NCBIfam" id="TIGR00240">
    <property type="entry name" value="ATCase_reg"/>
    <property type="match status" value="1"/>
</dbReference>
<dbReference type="PANTHER" id="PTHR35805">
    <property type="entry name" value="ASPARTATE CARBAMOYLTRANSFERASE REGULATORY CHAIN"/>
    <property type="match status" value="1"/>
</dbReference>
<dbReference type="PANTHER" id="PTHR35805:SF1">
    <property type="entry name" value="ASPARTATE CARBAMOYLTRANSFERASE REGULATORY CHAIN"/>
    <property type="match status" value="1"/>
</dbReference>
<dbReference type="Pfam" id="PF01948">
    <property type="entry name" value="PyrI"/>
    <property type="match status" value="1"/>
</dbReference>
<dbReference type="Pfam" id="PF02748">
    <property type="entry name" value="PyrI_C"/>
    <property type="match status" value="1"/>
</dbReference>
<dbReference type="SUPFAM" id="SSF57825">
    <property type="entry name" value="Aspartate carbamoyltransferase, Regulatory-chain, C-terminal domain"/>
    <property type="match status" value="1"/>
</dbReference>
<dbReference type="SUPFAM" id="SSF54893">
    <property type="entry name" value="Aspartate carbamoyltransferase, Regulatory-chain, N-terminal domain"/>
    <property type="match status" value="1"/>
</dbReference>
<organism>
    <name type="scientific">Tolumonas auensis (strain DSM 9187 / NBRC 110442 / TA 4)</name>
    <dbReference type="NCBI Taxonomy" id="595494"/>
    <lineage>
        <taxon>Bacteria</taxon>
        <taxon>Pseudomonadati</taxon>
        <taxon>Pseudomonadota</taxon>
        <taxon>Gammaproteobacteria</taxon>
        <taxon>Aeromonadales</taxon>
        <taxon>Aeromonadaceae</taxon>
        <taxon>Tolumonas</taxon>
    </lineage>
</organism>
<feature type="chain" id="PRO_1000201622" description="Aspartate carbamoyltransferase regulatory chain">
    <location>
        <begin position="1"/>
        <end position="154"/>
    </location>
</feature>
<feature type="binding site" evidence="1">
    <location>
        <position position="109"/>
    </location>
    <ligand>
        <name>Zn(2+)</name>
        <dbReference type="ChEBI" id="CHEBI:29105"/>
    </ligand>
</feature>
<feature type="binding site" evidence="1">
    <location>
        <position position="114"/>
    </location>
    <ligand>
        <name>Zn(2+)</name>
        <dbReference type="ChEBI" id="CHEBI:29105"/>
    </ligand>
</feature>
<feature type="binding site" evidence="1">
    <location>
        <position position="138"/>
    </location>
    <ligand>
        <name>Zn(2+)</name>
        <dbReference type="ChEBI" id="CHEBI:29105"/>
    </ligand>
</feature>
<feature type="binding site" evidence="1">
    <location>
        <position position="141"/>
    </location>
    <ligand>
        <name>Zn(2+)</name>
        <dbReference type="ChEBI" id="CHEBI:29105"/>
    </ligand>
</feature>
<keyword id="KW-0479">Metal-binding</keyword>
<keyword id="KW-0665">Pyrimidine biosynthesis</keyword>
<keyword id="KW-1185">Reference proteome</keyword>
<keyword id="KW-0862">Zinc</keyword>
<gene>
    <name evidence="1" type="primary">pyrI</name>
    <name type="ordered locus">Tola_2804</name>
</gene>
<reference key="1">
    <citation type="submission" date="2009-05" db="EMBL/GenBank/DDBJ databases">
        <title>Complete sequence of Tolumonas auensis DSM 9187.</title>
        <authorList>
            <consortium name="US DOE Joint Genome Institute"/>
            <person name="Lucas S."/>
            <person name="Copeland A."/>
            <person name="Lapidus A."/>
            <person name="Glavina del Rio T."/>
            <person name="Tice H."/>
            <person name="Bruce D."/>
            <person name="Goodwin L."/>
            <person name="Pitluck S."/>
            <person name="Chertkov O."/>
            <person name="Brettin T."/>
            <person name="Detter J.C."/>
            <person name="Han C."/>
            <person name="Larimer F."/>
            <person name="Land M."/>
            <person name="Hauser L."/>
            <person name="Kyrpides N."/>
            <person name="Mikhailova N."/>
            <person name="Spring S."/>
            <person name="Beller H."/>
        </authorList>
    </citation>
    <scope>NUCLEOTIDE SEQUENCE [LARGE SCALE GENOMIC DNA]</scope>
    <source>
        <strain>DSM 9187 / NBRC 110442 / TA 4</strain>
    </source>
</reference>
<sequence>MSEKKQLQVEAICNGSVIDHIPAGQGIKILKLFHLLDTRQRITVGLNLPSAALGSKDLIKVENTQLTADQANQLALFAPQATVNIIEDFKVVTKHQLELPGEIVGVFACPNSNCISHREPVRSRFGVRSTQGEVRLKCHYCEKSFTKEIVSEAF</sequence>
<accession>C4LBX3</accession>
<evidence type="ECO:0000255" key="1">
    <source>
        <dbReference type="HAMAP-Rule" id="MF_00002"/>
    </source>
</evidence>
<comment type="function">
    <text evidence="1">Involved in allosteric regulation of aspartate carbamoyltransferase.</text>
</comment>
<comment type="cofactor">
    <cofactor evidence="1">
        <name>Zn(2+)</name>
        <dbReference type="ChEBI" id="CHEBI:29105"/>
    </cofactor>
    <text evidence="1">Binds 1 zinc ion per subunit.</text>
</comment>
<comment type="subunit">
    <text evidence="1">Contains catalytic and regulatory chains.</text>
</comment>
<comment type="similarity">
    <text evidence="1">Belongs to the PyrI family.</text>
</comment>
<proteinExistence type="inferred from homology"/>
<protein>
    <recommendedName>
        <fullName evidence="1">Aspartate carbamoyltransferase regulatory chain</fullName>
    </recommendedName>
</protein>
<name>PYRI_TOLAT</name>